<organism>
    <name type="scientific">Clostridium botulinum (strain Langeland / NCTC 10281 / Type F)</name>
    <dbReference type="NCBI Taxonomy" id="441772"/>
    <lineage>
        <taxon>Bacteria</taxon>
        <taxon>Bacillati</taxon>
        <taxon>Bacillota</taxon>
        <taxon>Clostridia</taxon>
        <taxon>Eubacteriales</taxon>
        <taxon>Clostridiaceae</taxon>
        <taxon>Clostridium</taxon>
    </lineage>
</organism>
<reference key="1">
    <citation type="submission" date="2007-06" db="EMBL/GenBank/DDBJ databases">
        <authorList>
            <person name="Brinkac L.M."/>
            <person name="Daugherty S."/>
            <person name="Dodson R.J."/>
            <person name="Madupu R."/>
            <person name="Brown J.L."/>
            <person name="Bruce D."/>
            <person name="Detter C."/>
            <person name="Munk C."/>
            <person name="Smith L.A."/>
            <person name="Smith T.J."/>
            <person name="White O."/>
            <person name="Brettin T.S."/>
        </authorList>
    </citation>
    <scope>NUCLEOTIDE SEQUENCE [LARGE SCALE GENOMIC DNA]</scope>
    <source>
        <strain>Langeland / NCTC 10281 / Type F</strain>
    </source>
</reference>
<protein>
    <recommendedName>
        <fullName evidence="1">LexA repressor</fullName>
        <ecNumber evidence="1">3.4.21.88</ecNumber>
    </recommendedName>
</protein>
<accession>A7GE39</accession>
<sequence length="201" mass="22579">MNKSRIDKQNEVYNFIKLQIKEKGYPPSVREICKAVGLSSTSSVHFHLKRLEKEGLIKRDSSKTRAIEIVDPTSKKEVINVPIVGTITAGNPILAIENIEDVFPLPIDYVKNTKDLFMLKVSGESMIEAGILDGDLAIIEKTDSANNGDIVVALIDNEATLKRFFKESSYIRLQPENKSMKPIILENCKVLGRLVGIYRKY</sequence>
<name>LEXA_CLOBL</name>
<keyword id="KW-0068">Autocatalytic cleavage</keyword>
<keyword id="KW-0227">DNA damage</keyword>
<keyword id="KW-0234">DNA repair</keyword>
<keyword id="KW-0235">DNA replication</keyword>
<keyword id="KW-0238">DNA-binding</keyword>
<keyword id="KW-0378">Hydrolase</keyword>
<keyword id="KW-0678">Repressor</keyword>
<keyword id="KW-0742">SOS response</keyword>
<keyword id="KW-0804">Transcription</keyword>
<keyword id="KW-0805">Transcription regulation</keyword>
<gene>
    <name evidence="1" type="primary">lexA</name>
    <name type="ordered locus">CLI_1789</name>
</gene>
<evidence type="ECO:0000255" key="1">
    <source>
        <dbReference type="HAMAP-Rule" id="MF_00015"/>
    </source>
</evidence>
<feature type="chain" id="PRO_0000322723" description="LexA repressor">
    <location>
        <begin position="1"/>
        <end position="201"/>
    </location>
</feature>
<feature type="DNA-binding region" description="H-T-H motif" evidence="1">
    <location>
        <begin position="29"/>
        <end position="49"/>
    </location>
</feature>
<feature type="active site" description="For autocatalytic cleavage activity" evidence="1">
    <location>
        <position position="125"/>
    </location>
</feature>
<feature type="active site" description="For autocatalytic cleavage activity" evidence="1">
    <location>
        <position position="162"/>
    </location>
</feature>
<feature type="site" description="Cleavage; by autolysis" evidence="1">
    <location>
        <begin position="89"/>
        <end position="90"/>
    </location>
</feature>
<proteinExistence type="inferred from homology"/>
<comment type="function">
    <text evidence="1">Represses a number of genes involved in the response to DNA damage (SOS response), including recA and lexA. In the presence of single-stranded DNA, RecA interacts with LexA causing an autocatalytic cleavage which disrupts the DNA-binding part of LexA, leading to derepression of the SOS regulon and eventually DNA repair.</text>
</comment>
<comment type="catalytic activity">
    <reaction evidence="1">
        <text>Hydrolysis of Ala-|-Gly bond in repressor LexA.</text>
        <dbReference type="EC" id="3.4.21.88"/>
    </reaction>
</comment>
<comment type="subunit">
    <text evidence="1">Homodimer.</text>
</comment>
<comment type="similarity">
    <text evidence="1">Belongs to the peptidase S24 family.</text>
</comment>
<dbReference type="EC" id="3.4.21.88" evidence="1"/>
<dbReference type="EMBL" id="CP000728">
    <property type="protein sequence ID" value="ABS42138.1"/>
    <property type="molecule type" value="Genomic_DNA"/>
</dbReference>
<dbReference type="RefSeq" id="WP_003358834.1">
    <property type="nucleotide sequence ID" value="NC_009699.1"/>
</dbReference>
<dbReference type="SMR" id="A7GE39"/>
<dbReference type="MEROPS" id="S24.001"/>
<dbReference type="KEGG" id="cbf:CLI_1789"/>
<dbReference type="HOGENOM" id="CLU_066192_45_1_9"/>
<dbReference type="Proteomes" id="UP000002410">
    <property type="component" value="Chromosome"/>
</dbReference>
<dbReference type="GO" id="GO:0003677">
    <property type="term" value="F:DNA binding"/>
    <property type="evidence" value="ECO:0007669"/>
    <property type="project" value="UniProtKB-UniRule"/>
</dbReference>
<dbReference type="GO" id="GO:0004252">
    <property type="term" value="F:serine-type endopeptidase activity"/>
    <property type="evidence" value="ECO:0007669"/>
    <property type="project" value="UniProtKB-UniRule"/>
</dbReference>
<dbReference type="GO" id="GO:0006281">
    <property type="term" value="P:DNA repair"/>
    <property type="evidence" value="ECO:0007669"/>
    <property type="project" value="UniProtKB-UniRule"/>
</dbReference>
<dbReference type="GO" id="GO:0006260">
    <property type="term" value="P:DNA replication"/>
    <property type="evidence" value="ECO:0007669"/>
    <property type="project" value="UniProtKB-UniRule"/>
</dbReference>
<dbReference type="GO" id="GO:0045892">
    <property type="term" value="P:negative regulation of DNA-templated transcription"/>
    <property type="evidence" value="ECO:0007669"/>
    <property type="project" value="UniProtKB-UniRule"/>
</dbReference>
<dbReference type="GO" id="GO:0006508">
    <property type="term" value="P:proteolysis"/>
    <property type="evidence" value="ECO:0007669"/>
    <property type="project" value="InterPro"/>
</dbReference>
<dbReference type="GO" id="GO:0009432">
    <property type="term" value="P:SOS response"/>
    <property type="evidence" value="ECO:0007669"/>
    <property type="project" value="UniProtKB-UniRule"/>
</dbReference>
<dbReference type="CDD" id="cd00090">
    <property type="entry name" value="HTH_ARSR"/>
    <property type="match status" value="1"/>
</dbReference>
<dbReference type="CDD" id="cd06529">
    <property type="entry name" value="S24_LexA-like"/>
    <property type="match status" value="1"/>
</dbReference>
<dbReference type="FunFam" id="1.10.10.10:FF:000009">
    <property type="entry name" value="LexA repressor"/>
    <property type="match status" value="1"/>
</dbReference>
<dbReference type="FunFam" id="2.10.109.10:FF:000001">
    <property type="entry name" value="LexA repressor"/>
    <property type="match status" value="1"/>
</dbReference>
<dbReference type="Gene3D" id="2.10.109.10">
    <property type="entry name" value="Umud Fragment, subunit A"/>
    <property type="match status" value="1"/>
</dbReference>
<dbReference type="Gene3D" id="1.10.10.10">
    <property type="entry name" value="Winged helix-like DNA-binding domain superfamily/Winged helix DNA-binding domain"/>
    <property type="match status" value="1"/>
</dbReference>
<dbReference type="HAMAP" id="MF_00015">
    <property type="entry name" value="LexA"/>
    <property type="match status" value="1"/>
</dbReference>
<dbReference type="InterPro" id="IPR011991">
    <property type="entry name" value="ArsR-like_HTH"/>
</dbReference>
<dbReference type="InterPro" id="IPR006200">
    <property type="entry name" value="LexA"/>
</dbReference>
<dbReference type="InterPro" id="IPR039418">
    <property type="entry name" value="LexA-like"/>
</dbReference>
<dbReference type="InterPro" id="IPR036286">
    <property type="entry name" value="LexA/Signal_pep-like_sf"/>
</dbReference>
<dbReference type="InterPro" id="IPR006199">
    <property type="entry name" value="LexA_DNA-bd_dom"/>
</dbReference>
<dbReference type="InterPro" id="IPR050077">
    <property type="entry name" value="LexA_repressor"/>
</dbReference>
<dbReference type="InterPro" id="IPR006197">
    <property type="entry name" value="Peptidase_S24_LexA"/>
</dbReference>
<dbReference type="InterPro" id="IPR015927">
    <property type="entry name" value="Peptidase_S24_S26A/B/C"/>
</dbReference>
<dbReference type="InterPro" id="IPR036388">
    <property type="entry name" value="WH-like_DNA-bd_sf"/>
</dbReference>
<dbReference type="InterPro" id="IPR036390">
    <property type="entry name" value="WH_DNA-bd_sf"/>
</dbReference>
<dbReference type="NCBIfam" id="TIGR00498">
    <property type="entry name" value="lexA"/>
    <property type="match status" value="1"/>
</dbReference>
<dbReference type="PANTHER" id="PTHR33516">
    <property type="entry name" value="LEXA REPRESSOR"/>
    <property type="match status" value="1"/>
</dbReference>
<dbReference type="PANTHER" id="PTHR33516:SF2">
    <property type="entry name" value="LEXA REPRESSOR-RELATED"/>
    <property type="match status" value="1"/>
</dbReference>
<dbReference type="Pfam" id="PF01726">
    <property type="entry name" value="LexA_DNA_bind"/>
    <property type="match status" value="1"/>
</dbReference>
<dbReference type="Pfam" id="PF00717">
    <property type="entry name" value="Peptidase_S24"/>
    <property type="match status" value="1"/>
</dbReference>
<dbReference type="PRINTS" id="PR00726">
    <property type="entry name" value="LEXASERPTASE"/>
</dbReference>
<dbReference type="SUPFAM" id="SSF51306">
    <property type="entry name" value="LexA/Signal peptidase"/>
    <property type="match status" value="1"/>
</dbReference>
<dbReference type="SUPFAM" id="SSF46785">
    <property type="entry name" value="Winged helix' DNA-binding domain"/>
    <property type="match status" value="1"/>
</dbReference>